<accession>Q8IIJ9</accession>
<accession>A0A144A2G5</accession>
<keyword id="KW-0868">Chloride</keyword>
<keyword id="KW-0903">Direct protein sequencing</keyword>
<keyword id="KW-1015">Disulfide bond</keyword>
<keyword id="KW-0325">Glycoprotein</keyword>
<keyword id="KW-0378">Hydrolase</keyword>
<keyword id="KW-0645">Protease</keyword>
<keyword id="KW-1185">Reference proteome</keyword>
<keyword id="KW-0732">Signal</keyword>
<keyword id="KW-0765">Sulfation</keyword>
<keyword id="KW-0788">Thiol protease</keyword>
<keyword id="KW-0926">Vacuole</keyword>
<keyword id="KW-0865">Zymogen</keyword>
<evidence type="ECO:0000250" key="1">
    <source>
        <dbReference type="UniProtKB" id="P53634"/>
    </source>
</evidence>
<evidence type="ECO:0000255" key="2"/>
<evidence type="ECO:0000255" key="3">
    <source>
        <dbReference type="PROSITE-ProRule" id="PRU10088"/>
    </source>
</evidence>
<evidence type="ECO:0000255" key="4">
    <source>
        <dbReference type="PROSITE-ProRule" id="PRU10089"/>
    </source>
</evidence>
<evidence type="ECO:0000255" key="5">
    <source>
        <dbReference type="PROSITE-ProRule" id="PRU10090"/>
    </source>
</evidence>
<evidence type="ECO:0000269" key="6">
    <source>
    </source>
</evidence>
<evidence type="ECO:0000269" key="7">
    <source>
    </source>
</evidence>
<evidence type="ECO:0000269" key="8">
    <source>
    </source>
</evidence>
<evidence type="ECO:0000303" key="9">
    <source>
    </source>
</evidence>
<evidence type="ECO:0000305" key="10"/>
<evidence type="ECO:0000305" key="11">
    <source>
    </source>
</evidence>
<dbReference type="EC" id="3.4.14.1" evidence="7 8"/>
<dbReference type="EMBL" id="LN999945">
    <property type="protein sequence ID" value="CZT98828.1"/>
    <property type="molecule type" value="Genomic_DNA"/>
</dbReference>
<dbReference type="RefSeq" id="XP_001347845.1">
    <property type="nucleotide sequence ID" value="XM_001347809.1"/>
</dbReference>
<dbReference type="BioGRID" id="1206117">
    <property type="interactions" value="3"/>
</dbReference>
<dbReference type="FunCoup" id="Q8IIJ9">
    <property type="interactions" value="3"/>
</dbReference>
<dbReference type="IntAct" id="Q8IIJ9">
    <property type="interactions" value="3"/>
</dbReference>
<dbReference type="STRING" id="36329.Q8IIJ9"/>
<dbReference type="ChEMBL" id="CHEMBL1250372"/>
<dbReference type="DrugBank" id="DB11638">
    <property type="generic name" value="Artenimol"/>
</dbReference>
<dbReference type="GlyCosmos" id="Q8IIJ9">
    <property type="glycosylation" value="10 sites, No reported glycans"/>
</dbReference>
<dbReference type="PaxDb" id="5833-PF11_0174"/>
<dbReference type="EnsemblProtists" id="CZT98828">
    <property type="protein sequence ID" value="CZT98828"/>
    <property type="gene ID" value="PF3D7_1116700"/>
</dbReference>
<dbReference type="GeneID" id="810721"/>
<dbReference type="KEGG" id="pfa:PF3D7_1116700"/>
<dbReference type="VEuPathDB" id="PlasmoDB:PF3D7_1116700"/>
<dbReference type="HOGENOM" id="CLU_462725_0_0_1"/>
<dbReference type="InParanoid" id="Q8IIJ9"/>
<dbReference type="OMA" id="CYIASQM"/>
<dbReference type="OrthoDB" id="640249at2759"/>
<dbReference type="PhylomeDB" id="Q8IIJ9"/>
<dbReference type="BioCyc" id="MetaCyc:MONOMER-15382"/>
<dbReference type="Reactome" id="R-PFA-114608">
    <property type="pathway name" value="Platelet degranulation"/>
</dbReference>
<dbReference type="Reactome" id="R-PFA-2132295">
    <property type="pathway name" value="MHC class II antigen presentation"/>
</dbReference>
<dbReference type="PRO" id="PR:Q8IIJ9"/>
<dbReference type="Proteomes" id="UP000001450">
    <property type="component" value="Chromosome 11"/>
</dbReference>
<dbReference type="GO" id="GO:0005615">
    <property type="term" value="C:extracellular space"/>
    <property type="evidence" value="ECO:0000318"/>
    <property type="project" value="GO_Central"/>
</dbReference>
<dbReference type="GO" id="GO:0020020">
    <property type="term" value="C:food vacuole"/>
    <property type="evidence" value="ECO:0000314"/>
    <property type="project" value="GeneDB"/>
</dbReference>
<dbReference type="GO" id="GO:0005764">
    <property type="term" value="C:lysosome"/>
    <property type="evidence" value="ECO:0000318"/>
    <property type="project" value="GO_Central"/>
</dbReference>
<dbReference type="GO" id="GO:0020003">
    <property type="term" value="C:symbiont-containing vacuole"/>
    <property type="evidence" value="ECO:0000314"/>
    <property type="project" value="GeneDB"/>
</dbReference>
<dbReference type="GO" id="GO:0005775">
    <property type="term" value="C:vacuolar lumen"/>
    <property type="evidence" value="ECO:0007669"/>
    <property type="project" value="UniProtKB-SubCell"/>
</dbReference>
<dbReference type="GO" id="GO:0004197">
    <property type="term" value="F:cysteine-type endopeptidase activity"/>
    <property type="evidence" value="ECO:0000318"/>
    <property type="project" value="GO_Central"/>
</dbReference>
<dbReference type="GO" id="GO:0008239">
    <property type="term" value="F:dipeptidyl-peptidase activity"/>
    <property type="evidence" value="ECO:0000314"/>
    <property type="project" value="UniProtKB"/>
</dbReference>
<dbReference type="GO" id="GO:0051603">
    <property type="term" value="P:proteolysis involved in protein catabolic process"/>
    <property type="evidence" value="ECO:0000314"/>
    <property type="project" value="UniProtKB"/>
</dbReference>
<dbReference type="CDD" id="cd02621">
    <property type="entry name" value="Peptidase_C1A_CathepsinC"/>
    <property type="match status" value="1"/>
</dbReference>
<dbReference type="FunFam" id="3.90.70.10:FF:000139">
    <property type="entry name" value="Dipeptidyl aminopeptidase 1"/>
    <property type="match status" value="1"/>
</dbReference>
<dbReference type="Gene3D" id="2.40.128.80">
    <property type="entry name" value="Cathepsin C, exclusion domain"/>
    <property type="match status" value="1"/>
</dbReference>
<dbReference type="Gene3D" id="3.90.70.10">
    <property type="entry name" value="Cysteine proteinases"/>
    <property type="match status" value="1"/>
</dbReference>
<dbReference type="InterPro" id="IPR039412">
    <property type="entry name" value="CatC"/>
</dbReference>
<dbReference type="InterPro" id="IPR014882">
    <property type="entry name" value="CathepsinC_exc"/>
</dbReference>
<dbReference type="InterPro" id="IPR036496">
    <property type="entry name" value="CathepsinC_exc_dom_sf"/>
</dbReference>
<dbReference type="InterPro" id="IPR038765">
    <property type="entry name" value="Papain-like_cys_pep_sf"/>
</dbReference>
<dbReference type="InterPro" id="IPR025661">
    <property type="entry name" value="Pept_asp_AS"/>
</dbReference>
<dbReference type="InterPro" id="IPR025660">
    <property type="entry name" value="Pept_his_AS"/>
</dbReference>
<dbReference type="InterPro" id="IPR013128">
    <property type="entry name" value="Peptidase_C1A"/>
</dbReference>
<dbReference type="InterPro" id="IPR000668">
    <property type="entry name" value="Peptidase_C1A_C"/>
</dbReference>
<dbReference type="PANTHER" id="PTHR12411">
    <property type="entry name" value="CYSTEINE PROTEASE FAMILY C1-RELATED"/>
    <property type="match status" value="1"/>
</dbReference>
<dbReference type="Pfam" id="PF08773">
    <property type="entry name" value="CathepsinC_exc"/>
    <property type="match status" value="1"/>
</dbReference>
<dbReference type="Pfam" id="PF00112">
    <property type="entry name" value="Peptidase_C1"/>
    <property type="match status" value="2"/>
</dbReference>
<dbReference type="SMART" id="SM00645">
    <property type="entry name" value="Pept_C1"/>
    <property type="match status" value="1"/>
</dbReference>
<dbReference type="SUPFAM" id="SSF54001">
    <property type="entry name" value="Cysteine proteinases"/>
    <property type="match status" value="1"/>
</dbReference>
<dbReference type="SUPFAM" id="SSF75001">
    <property type="entry name" value="Dipeptidyl peptidase I (cathepsin C), exclusion domain"/>
    <property type="match status" value="1"/>
</dbReference>
<dbReference type="PROSITE" id="PS00640">
    <property type="entry name" value="THIOL_PROTEASE_ASN"/>
    <property type="match status" value="1"/>
</dbReference>
<dbReference type="PROSITE" id="PS00639">
    <property type="entry name" value="THIOL_PROTEASE_HIS"/>
    <property type="match status" value="1"/>
</dbReference>
<organism>
    <name type="scientific">Plasmodium falciparum (isolate 3D7)</name>
    <dbReference type="NCBI Taxonomy" id="36329"/>
    <lineage>
        <taxon>Eukaryota</taxon>
        <taxon>Sar</taxon>
        <taxon>Alveolata</taxon>
        <taxon>Apicomplexa</taxon>
        <taxon>Aconoidasida</taxon>
        <taxon>Haemosporida</taxon>
        <taxon>Plasmodiidae</taxon>
        <taxon>Plasmodium</taxon>
        <taxon>Plasmodium (Laverania)</taxon>
    </lineage>
</organism>
<name>DPAP1_PLAF7</name>
<comment type="function">
    <text evidence="7 8">Thiol protease that cleaves dipeptides from the N-terminus of protein substrates (PubMed:15304495, PubMed:20833209). Active against a broad range of dipeptide substrates composed of both polar and hydrophobic amino acids (PubMed:20833209). Proline cannot occupy the P1 position and arginine or lysine cannot occupy the P2 position of the substrate (PubMed:20833209). Involved in host hemoglobin degradation by generating dipeptides from hemoglobin-derived oligopeptides (PubMed:15304495).</text>
</comment>
<comment type="catalytic activity">
    <reaction evidence="7 8">
        <text>Release of an N-terminal dipeptide, Xaa-Yaa-|-Zaa-, except when Xaa is Arg or Lys, or Yaa or Zaa is Pro.</text>
        <dbReference type="EC" id="3.4.14.1"/>
    </reaction>
</comment>
<comment type="cofactor">
    <cofactor evidence="8">
        <name>chloride</name>
        <dbReference type="ChEBI" id="CHEBI:17996"/>
    </cofactor>
    <text evidence="1">Binds 1 Cl(-) ion per heavy chain.</text>
</comment>
<comment type="biophysicochemical properties">
    <phDependence>
        <text evidence="8">Optimum pH is 6-6.5.</text>
    </phDependence>
</comment>
<comment type="subunit">
    <text evidence="8">Monomer.</text>
</comment>
<comment type="subcellular location">
    <subcellularLocation>
        <location evidence="7">Vacuole lumen</location>
    </subcellularLocation>
    <subcellularLocation>
        <location evidence="7">Parasitophorous vacuole lumen</location>
    </subcellularLocation>
    <text evidence="7">In schizonts, the immature form localizes to the parasitophorous vacuole (PubMed:15304495). In trophozoites, the mature form localizes to the digestive (or food) vacuole, an acidic vacuole where host hemoglobin is digested (PubMed:15304495).</text>
</comment>
<comment type="developmental stage">
    <text evidence="7">Expressed during the asexual blood stage including in trophozoites and schizonts (at protein level).</text>
</comment>
<comment type="similarity">
    <text evidence="10">Belongs to the peptidase C1 family.</text>
</comment>
<reference key="1">
    <citation type="journal article" date="2002" name="Nature">
        <title>Genome sequence of the human malaria parasite Plasmodium falciparum.</title>
        <authorList>
            <person name="Gardner M.J."/>
            <person name="Hall N."/>
            <person name="Fung E."/>
            <person name="White O."/>
            <person name="Berriman M."/>
            <person name="Hyman R.W."/>
            <person name="Carlton J.M."/>
            <person name="Pain A."/>
            <person name="Nelson K.E."/>
            <person name="Bowman S."/>
            <person name="Paulsen I.T."/>
            <person name="James K.D."/>
            <person name="Eisen J.A."/>
            <person name="Rutherford K.M."/>
            <person name="Salzberg S.L."/>
            <person name="Craig A."/>
            <person name="Kyes S."/>
            <person name="Chan M.-S."/>
            <person name="Nene V."/>
            <person name="Shallom S.J."/>
            <person name="Suh B."/>
            <person name="Peterson J."/>
            <person name="Angiuoli S."/>
            <person name="Pertea M."/>
            <person name="Allen J."/>
            <person name="Selengut J."/>
            <person name="Haft D."/>
            <person name="Mather M.W."/>
            <person name="Vaidya A.B."/>
            <person name="Martin D.M.A."/>
            <person name="Fairlamb A.H."/>
            <person name="Fraunholz M.J."/>
            <person name="Roos D.S."/>
            <person name="Ralph S.A."/>
            <person name="McFadden G.I."/>
            <person name="Cummings L.M."/>
            <person name="Subramanian G.M."/>
            <person name="Mungall C."/>
            <person name="Venter J.C."/>
            <person name="Carucci D.J."/>
            <person name="Hoffman S.L."/>
            <person name="Newbold C."/>
            <person name="Davis R.W."/>
            <person name="Fraser C.M."/>
            <person name="Barrell B.G."/>
        </authorList>
    </citation>
    <scope>NUCLEOTIDE SEQUENCE [LARGE SCALE GENOMIC DNA]</scope>
    <source>
        <strain>3D7</strain>
    </source>
</reference>
<reference key="2">
    <citation type="journal article" date="2004" name="Mol. Cell. Proteomics">
        <title>O-sulfonation of serine and threonine: mass spectrometric detection and characterization of a new posttranslational modification in diverse proteins throughout the eukaryotes.</title>
        <authorList>
            <person name="Medzihradszky K.F."/>
            <person name="Darula Z."/>
            <person name="Perlson E."/>
            <person name="Fainzilber M."/>
            <person name="Chalkley R.J."/>
            <person name="Ball H."/>
            <person name="Greenbaum D."/>
            <person name="Bogyo M."/>
            <person name="Tyson D.R."/>
            <person name="Bradshaw R.A."/>
            <person name="Burlingame A.L."/>
        </authorList>
    </citation>
    <scope>IDENTIFICATION BY MASS SPECTROMETRY</scope>
    <scope>PROTEIN SEQUENCE OF 410-417</scope>
    <scope>SULFATION AT THR-416</scope>
</reference>
<reference key="3">
    <citation type="journal article" date="2004" name="J. Biol. Chem.">
        <title>A Plasmodium falciparum dipeptidyl aminopeptidase I participates in vacuolar hemoglobin degradation.</title>
        <authorList>
            <person name="Klemba M."/>
            <person name="Gluzman I."/>
            <person name="Goldberg D.E."/>
        </authorList>
    </citation>
    <scope>FUNCTION</scope>
    <scope>CATALYTIC ACTIVITY</scope>
    <scope>SUBCELLULAR LOCATION</scope>
    <scope>DEVELOPMENTAL STAGE</scope>
    <scope>PROTEOLYTIC CLEAVAGE</scope>
</reference>
<reference key="4">
    <citation type="journal article" date="2011" name="Mol. Biochem. Parasitol.">
        <title>Biochemical characterization of Plasmodium falciparum dipeptidyl aminopeptidase 1.</title>
        <authorList>
            <person name="Wang F."/>
            <person name="Krai P."/>
            <person name="Deu E."/>
            <person name="Bibb B."/>
            <person name="Lauritzen C."/>
            <person name="Pedersen J."/>
            <person name="Bogyo M."/>
            <person name="Klemba M."/>
        </authorList>
    </citation>
    <scope>FUNCTION</scope>
    <scope>CATALYTIC ACTIVITY</scope>
    <scope>COFACTOR</scope>
    <scope>BIOPHYSICOCHEMICAL PROPERTIES</scope>
    <scope>SUBUNIT</scope>
</reference>
<feature type="signal peptide" evidence="2">
    <location>
        <begin position="1"/>
        <end position="27"/>
    </location>
</feature>
<feature type="chain" id="PRO_0000026355" description="Dipeptidyl aminopeptidase 1 exclusion domain chain" evidence="11">
    <location>
        <begin position="28"/>
        <end position="209" status="uncertain"/>
    </location>
</feature>
<feature type="propeptide" id="PRO_0000026354" evidence="11">
    <location>
        <begin position="210" status="uncertain"/>
        <end position="369" status="uncertain"/>
    </location>
</feature>
<feature type="chain" id="PRO_0000454586" description="Dipeptidyl aminopeptidase 1 heavy chain" evidence="11">
    <location>
        <begin position="370" status="uncertain"/>
        <end position="599" status="uncertain"/>
    </location>
</feature>
<feature type="chain" id="PRO_0000454587" description="Dipeptidyl aminopeptidase 1 light chain" evidence="11">
    <location>
        <begin position="600" status="uncertain"/>
        <end position="700"/>
    </location>
</feature>
<feature type="active site" evidence="3">
    <location>
        <position position="398"/>
    </location>
</feature>
<feature type="active site" evidence="4">
    <location>
        <position position="624"/>
    </location>
</feature>
<feature type="active site" evidence="5">
    <location>
        <position position="648"/>
    </location>
</feature>
<feature type="binding site" evidence="1">
    <location>
        <position position="450"/>
    </location>
    <ligand>
        <name>chloride</name>
        <dbReference type="ChEBI" id="CHEBI:17996"/>
    </ligand>
</feature>
<feature type="binding site" evidence="1">
    <location>
        <position position="452"/>
    </location>
    <ligand>
        <name>chloride</name>
        <dbReference type="ChEBI" id="CHEBI:17996"/>
    </ligand>
</feature>
<feature type="binding site" evidence="1">
    <location>
        <position position="549"/>
    </location>
    <ligand>
        <name>chloride</name>
        <dbReference type="ChEBI" id="CHEBI:17996"/>
    </ligand>
</feature>
<feature type="modified residue" description="Sulfothreonine" evidence="6">
    <location>
        <position position="416"/>
    </location>
</feature>
<feature type="glycosylation site" description="N-linked (GlcNAc...) asparagine" evidence="2">
    <location>
        <position position="52"/>
    </location>
</feature>
<feature type="glycosylation site" description="N-linked (GlcNAc...) asparagine" evidence="2">
    <location>
        <position position="144"/>
    </location>
</feature>
<feature type="glycosylation site" description="N-linked (GlcNAc...) asparagine" evidence="2">
    <location>
        <position position="265"/>
    </location>
</feature>
<feature type="glycosylation site" description="N-linked (GlcNAc...) asparagine" evidence="2">
    <location>
        <position position="337"/>
    </location>
</feature>
<feature type="glycosylation site" description="N-linked (GlcNAc...) asparagine" evidence="2">
    <location>
        <position position="373"/>
    </location>
</feature>
<feature type="glycosylation site" description="N-linked (GlcNAc...) asparagine" evidence="2">
    <location>
        <position position="481"/>
    </location>
</feature>
<feature type="glycosylation site" description="N-linked (GlcNAc...) asparagine" evidence="2">
    <location>
        <position position="490"/>
    </location>
</feature>
<feature type="glycosylation site" description="N-linked (GlcNAc...) asparagine" evidence="2">
    <location>
        <position position="507"/>
    </location>
</feature>
<feature type="glycosylation site" description="N-linked (GlcNAc...) asparagine" evidence="2">
    <location>
        <position position="615"/>
    </location>
</feature>
<feature type="glycosylation site" description="N-linked (GlcNAc...) asparagine" evidence="2">
    <location>
        <position position="667"/>
    </location>
</feature>
<feature type="disulfide bond" evidence="1">
    <location>
        <begin position="395"/>
        <end position="446"/>
    </location>
</feature>
<feature type="disulfide bond" evidence="1">
    <location>
        <begin position="439"/>
        <end position="478"/>
    </location>
</feature>
<proteinExistence type="evidence at protein level"/>
<gene>
    <name evidence="9" type="primary">DPAP1</name>
    <name type="ORF">PF11_0174</name>
    <name type="ORF">PF3D7_1116700</name>
</gene>
<sequence>MAKRIFSVSFLLVLLNVLHICIKFSVADLPTHVETKNLLGKWKILRTKTSPNLTTCGSSQPNKNTYNVGITDYKKYLLENNYEFVSELNVILSDDYVLYGDIYNTQDNEHRSKWKVLAVYDENKRVIGTWTTICDEGFEIKIGNETYAALMHYEPNGKCGPVSDEDSLDSNGDTDCYTTSFSKIRYGWLDVENEKNEHLHGCFYAERIFDNVNEIKHLDSFTIDKDSQNVLQTFTYDTKLNNILNSNNMLYKFGNLQKPTFTKRNNTNVQFNSELNWHRMKHHGKKKPLKKSMLDASRQTYACPCNANEVVDNVINKGDSDNPVSPTLIQLNNNLKNTTQTGNKDTNEMDLENYEDTLNSPKRELEINELPKNFTWGDPWNKNTREYEVTNQLLCGSCYIASQLYAFKRRIEVALTKKLDRKYLNNFDDQLSIQTVLSCSFYDQGCNGGFPYLVSKLAKLQGIPLNVYFPYSATEETCPYNISKHPNDMNGSAKLREINAIFNSNNNMSTYNNINNDHHQLGVYANTASSQEQHGISEENRWYAKDFNYVGGCYGCNQCNGEKIMMNEIYRNGPIVSSFEASPDFYDYADGVYFVEDFPHARRCTIEPKNDGVYNITGWDRVNHAIVLLGWGEEEINGKLYKYWIGRNSWGNGWGKEGYFKILRGQNFSGIESQSLFIEPDFSRGAGKILLEKMQKELGN</sequence>
<protein>
    <recommendedName>
        <fullName evidence="9">Dipeptidyl aminopeptidase 1</fullName>
    </recommendedName>
    <alternativeName>
        <fullName evidence="10">Cathepsin C homolog</fullName>
        <ecNumber evidence="7 8">3.4.14.1</ecNumber>
    </alternativeName>
    <component>
        <recommendedName>
            <fullName evidence="9">Dipeptidyl aminopeptidase 1 exclusion domain chain</fullName>
        </recommendedName>
    </component>
    <component>
        <recommendedName>
            <fullName evidence="9">Dipeptidyl aminopeptidase 1 heavy chain</fullName>
        </recommendedName>
    </component>
    <component>
        <recommendedName>
            <fullName evidence="9">Dipeptidyl aminopeptidase 1 light chain</fullName>
        </recommendedName>
    </component>
</protein>